<comment type="function">
    <text evidence="2 3 5">Component of the alkene monooxygenase multicomponent enzyme system which catalyzes the O2- and NADH-dependent epoxidation of short chain (C2 to C6) alkenes to their corresponding epoxides (PubMed:10103255, PubMed:1444418, PubMed:9312093). Also able to catalyze the oxidation of a number of chlorinated alkenes, including trichloroethylene, cis- and trans-1,2-dichloroethylene, vinyl chloride, 1-chloropropylene, 1,3-dichloropropylene and 2,3-dichloropropylene (PubMed:1444418).</text>
</comment>
<comment type="catalytic activity">
    <reaction evidence="3 5">
        <text>propene + NADH + O2 + H(+) = 1,2-epoxypropane + NAD(+) + H2O</text>
        <dbReference type="Rhea" id="RHEA:11792"/>
        <dbReference type="ChEBI" id="CHEBI:15377"/>
        <dbReference type="ChEBI" id="CHEBI:15378"/>
        <dbReference type="ChEBI" id="CHEBI:15379"/>
        <dbReference type="ChEBI" id="CHEBI:16052"/>
        <dbReference type="ChEBI" id="CHEBI:38685"/>
        <dbReference type="ChEBI" id="CHEBI:57540"/>
        <dbReference type="ChEBI" id="CHEBI:57945"/>
        <dbReference type="EC" id="1.14.13.69"/>
    </reaction>
</comment>
<comment type="cofactor">
    <cofactor evidence="5">
        <name>Fe(2+)</name>
        <dbReference type="ChEBI" id="CHEBI:29033"/>
    </cofactor>
    <text evidence="5 10">Binds 2 Fe(2+) ions per subunit (PubMed:9312093). The two iron ions could form a binuclear cluster (Probable).</text>
</comment>
<comment type="activity regulation">
    <text evidence="3">Inhibited by propyne.</text>
</comment>
<comment type="subunit">
    <text evidence="5">The alkene monooxygenase multicomponent enzyme system is composed of an electron transfer component and a monooxygenase component interacting with the effector protein XamoD. The electron transfer component is composed of a ferredoxin reductase (XamoF) and a ferredoxin (XamoC), and the monooxygenase component is formed by a heterohexamer (dimer of heterotrimers) of two alpha subunits (XamoA), two beta subunits (XamoE) and two gamma subunits (XamoB).</text>
</comment>
<comment type="subcellular location">
    <subcellularLocation>
        <location evidence="9">Cytoplasm</location>
    </subcellularLocation>
</comment>
<comment type="induction">
    <text evidence="4">Induced during growth on aliphatic alkenes (such as propylene, ethylene and 1-butylene), epoxides (such as propylene oxide and 1,2-epoxybutane) and chlorinated alkenes and epoxides (such as vinyl chloride, cis- and trans-1,2-dichloroethylene, 1-chloropropylene, 1,3-dichloropropylene, epichlorohydrin, and epifluorohydrin). Repressed during growth on other carbon sources.</text>
</comment>
<comment type="similarity">
    <text evidence="8">Belongs to the TmoA/XamoA family.</text>
</comment>
<accession>O87082</accession>
<organism>
    <name type="scientific">Xanthobacter autotrophicus (strain ATCC BAA-1158 / Py2)</name>
    <dbReference type="NCBI Taxonomy" id="78245"/>
    <lineage>
        <taxon>Bacteria</taxon>
        <taxon>Pseudomonadati</taxon>
        <taxon>Pseudomonadota</taxon>
        <taxon>Alphaproteobacteria</taxon>
        <taxon>Hyphomicrobiales</taxon>
        <taxon>Xanthobacteraceae</taxon>
        <taxon>Xanthobacter</taxon>
    </lineage>
</organism>
<proteinExistence type="evidence at protein level"/>
<name>XAMOA_XANP2</name>
<dbReference type="EC" id="1.14.13.69" evidence="3 5"/>
<dbReference type="EMBL" id="AJ006979">
    <property type="protein sequence ID" value="CAA07366.1"/>
    <property type="molecule type" value="Genomic_DNA"/>
</dbReference>
<dbReference type="EMBL" id="AJ012090">
    <property type="protein sequence ID" value="CAA09911.1"/>
    <property type="molecule type" value="Genomic_DNA"/>
</dbReference>
<dbReference type="EMBL" id="CP000782">
    <property type="protein sequence ID" value="ABS70068.1"/>
    <property type="molecule type" value="Genomic_DNA"/>
</dbReference>
<dbReference type="SMR" id="O87082"/>
<dbReference type="KEGG" id="xau:Xaut_4857"/>
<dbReference type="eggNOG" id="COG3350">
    <property type="taxonomic scope" value="Bacteria"/>
</dbReference>
<dbReference type="HOGENOM" id="CLU_040795_0_0_5"/>
<dbReference type="OrthoDB" id="7591937at2"/>
<dbReference type="PhylomeDB" id="O87082"/>
<dbReference type="BioCyc" id="MetaCyc:MONOMER-13290"/>
<dbReference type="BRENDA" id="1.14.13.69">
    <property type="organism ID" value="1641"/>
</dbReference>
<dbReference type="Proteomes" id="UP000002417">
    <property type="component" value="Plasmid pXAUT01"/>
</dbReference>
<dbReference type="GO" id="GO:0005737">
    <property type="term" value="C:cytoplasm"/>
    <property type="evidence" value="ECO:0007669"/>
    <property type="project" value="UniProtKB-SubCell"/>
</dbReference>
<dbReference type="GO" id="GO:0018645">
    <property type="term" value="F:alkene monooxygenase activity"/>
    <property type="evidence" value="ECO:0007669"/>
    <property type="project" value="UniProtKB-EC"/>
</dbReference>
<dbReference type="GO" id="GO:0046872">
    <property type="term" value="F:metal ion binding"/>
    <property type="evidence" value="ECO:0007669"/>
    <property type="project" value="UniProtKB-KW"/>
</dbReference>
<dbReference type="CDD" id="cd01057">
    <property type="entry name" value="AAMH_A"/>
    <property type="match status" value="1"/>
</dbReference>
<dbReference type="Gene3D" id="1.10.620.20">
    <property type="entry name" value="Ribonucleotide Reductase, subunit A"/>
    <property type="match status" value="1"/>
</dbReference>
<dbReference type="InterPro" id="IPR009078">
    <property type="entry name" value="Ferritin-like_SF"/>
</dbReference>
<dbReference type="InterPro" id="IPR003430">
    <property type="entry name" value="Phenol_Hydrox"/>
</dbReference>
<dbReference type="InterPro" id="IPR012348">
    <property type="entry name" value="RNR-like"/>
</dbReference>
<dbReference type="InterPro" id="IPR007029">
    <property type="entry name" value="YHS_dom"/>
</dbReference>
<dbReference type="Pfam" id="PF02332">
    <property type="entry name" value="Phenol_Hydrox"/>
    <property type="match status" value="1"/>
</dbReference>
<dbReference type="Pfam" id="PF04945">
    <property type="entry name" value="YHS"/>
    <property type="match status" value="1"/>
</dbReference>
<dbReference type="SUPFAM" id="SSF47240">
    <property type="entry name" value="Ferritin-like"/>
    <property type="match status" value="1"/>
</dbReference>
<keyword id="KW-0963">Cytoplasm</keyword>
<keyword id="KW-0408">Iron</keyword>
<keyword id="KW-0479">Metal-binding</keyword>
<keyword id="KW-0503">Monooxygenase</keyword>
<keyword id="KW-0520">NAD</keyword>
<keyword id="KW-0560">Oxidoreductase</keyword>
<keyword id="KW-0614">Plasmid</keyword>
<keyword id="KW-1185">Reference proteome</keyword>
<geneLocation type="plasmid" evidence="11 14">
    <name>pXAUT01</name>
</geneLocation>
<reference key="1">
    <citation type="journal article" date="1998" name="FEBS Lett.">
        <title>The alkene monooxygenase from Xanthobacter Py2 is a binuclear non-haem iron protein closely related to toluene 4-monooxygenase.</title>
        <authorList>
            <person name="Zhou N.Y."/>
            <person name="Jenkins A."/>
            <person name="Chion C.K.N.C.K."/>
        </authorList>
    </citation>
    <scope>NUCLEOTIDE SEQUENCE [GENOMIC DNA]</scope>
    <scope>COFACTOR</scope>
    <source>
        <strain evidence="12">ATCC BAA-1158 / Py2</strain>
    </source>
</reference>
<reference key="2">
    <citation type="journal article" date="1999" name="Appl. Environ. Microbiol.">
        <title>The alkene monooxygenase from Xanthobacter strain Py2 is closely related to aromatic monooxygenases and catalyzes aromatic monohydroxylation of benzene, toluene, and phenol.</title>
        <authorList>
            <person name="Zhou N.Y."/>
            <person name="Jenkins A."/>
            <person name="Chan Kwo Chion C.K."/>
            <person name="Leak D.J."/>
        </authorList>
    </citation>
    <scope>NUCLEOTIDE SEQUENCE [GENOMIC DNA]</scope>
    <scope>FUNCTION</scope>
    <source>
        <strain evidence="13">ATCC BAA-1158 / Py2</strain>
    </source>
</reference>
<reference key="3">
    <citation type="submission" date="2007-07" db="EMBL/GenBank/DDBJ databases">
        <title>Complete sequence of plasmid pXAUT01 of Xanthobacter autotrophicus Py2.</title>
        <authorList>
            <consortium name="US DOE Joint Genome Institute"/>
            <person name="Copeland A."/>
            <person name="Lucas S."/>
            <person name="Lapidus A."/>
            <person name="Barry K."/>
            <person name="Glavina del Rio T."/>
            <person name="Hammon N."/>
            <person name="Israni S."/>
            <person name="Dalin E."/>
            <person name="Tice H."/>
            <person name="Pitluck S."/>
            <person name="Sims D."/>
            <person name="Brettin T."/>
            <person name="Bruce D."/>
            <person name="Detter J.C."/>
            <person name="Han C."/>
            <person name="Tapia R."/>
            <person name="Brainard J."/>
            <person name="Schmutz J."/>
            <person name="Larimer F."/>
            <person name="Land M."/>
            <person name="Hauser L."/>
            <person name="Kyrpides N."/>
            <person name="Kim E."/>
            <person name="Ensigns S.A."/>
            <person name="Richardson P."/>
        </authorList>
    </citation>
    <scope>NUCLEOTIDE SEQUENCE [LARGE SCALE GENOMIC DNA]</scope>
    <source>
        <strain evidence="14">ATCC BAA-1158 / Py2</strain>
        <plasmid evidence="11">pXAUT01</plasmid>
    </source>
</reference>
<reference key="4">
    <citation type="journal article" date="1992" name="Appl. Environ. Microbiol.">
        <title>Cometabolic degradation of chlorinated alkenes by alkene monooxygenase in a propylene-grown Xanthobacter strain.</title>
        <authorList>
            <person name="Ensign S.A."/>
            <person name="Hyman M.R."/>
            <person name="Arp D.J."/>
        </authorList>
    </citation>
    <scope>FUNCTION</scope>
    <scope>CATALYTIC ACTIVITY</scope>
    <scope>ACTIVITY REGULATION</scope>
    <scope>SUBSTRATE SPECIFICITY</scope>
    <source>
        <strain>ATCC BAA-1158 / Py2</strain>
    </source>
</reference>
<reference key="5">
    <citation type="journal article" date="1996" name="Appl. Environ. Microbiol.">
        <title>Aliphatic and chlorinated alkenes and epoxides as inducers of alkene monooxygenase and epoxidase activities in Xanthobacter strain Py2.</title>
        <authorList>
            <person name="Ensign S.A."/>
        </authorList>
    </citation>
    <scope>INDUCTION</scope>
    <source>
        <strain>ATCC BAA-1158 / Py2</strain>
    </source>
</reference>
<reference key="6">
    <citation type="journal article" date="1997" name="J. Biol. Chem.">
        <title>Alkene monooxygenase from Xanthobacter strain Py2. Purification and characterization of a four-component system central to the bacterial metabolism of aliphatic alkenes.</title>
        <authorList>
            <person name="Small F.J."/>
            <person name="Ensign S.A."/>
        </authorList>
    </citation>
    <scope>FUNCTION</scope>
    <scope>CATALYTIC ACTIVITY</scope>
    <scope>COFACTOR</scope>
    <scope>SUBCELLULAR LOCATION</scope>
    <scope>SUBUNIT</scope>
    <source>
        <strain>ATCC BAA-1158 / Py2</strain>
    </source>
</reference>
<sequence length="497" mass="58041">MALLNRDDWYDIARDVDWTLSYVDRAVAFPEEWKGEKDICGTAWDDWDEPFRVSFREYVMVQRDKEASVGAIREAMVRAKAYEKLDDGHKATSHLHMGTITMVEHMAVTMQSRFVRFAPSARWRSLGAFGMLDETRHTQLDLRFSHDLLNDSPSFDWSQRAFHTDEWAVLATRNLFDDIMLNADCVEAALATSLTLEHGFTNIQFVALASDAMEAGDVNFSNLLSSIQTDEARHAQLGFPTLDVMMKHDPKRAQQILDVAFWRSYRIFQAVTGVSMDYYTPVAKRQMSFKEFMLEWIVKHHERILRDYGLQKPWYWDTFEKTLDHGHHALHIGTWFWRPTLFWDPNGGVSREERRWLNQKYPNWEESWGVLWDEIISNINAGNIEKTLPETLPMLCNVTNLPIGSHWDRFHLKPEQLVYKGRLYTFDSDVSKWIFELDPERYAGHTNVVDRFIGGQIQPMTIEGVLNWMGLTPEVMGKDVFNYRWAGDYAENRIAAE</sequence>
<feature type="chain" id="PRO_0000442691" description="Alkene monooxygenase system, oxygenase component subunit alpha">
    <location>
        <begin position="1"/>
        <end position="497"/>
    </location>
</feature>
<feature type="binding site" evidence="1">
    <location>
        <position position="104"/>
    </location>
    <ligand>
        <name>Fe cation</name>
        <dbReference type="ChEBI" id="CHEBI:24875"/>
        <label>1</label>
        <note>catalytic</note>
    </ligand>
</feature>
<feature type="binding site" evidence="1">
    <location>
        <position position="134"/>
    </location>
    <ligand>
        <name>Fe cation</name>
        <dbReference type="ChEBI" id="CHEBI:24875"/>
        <label>1</label>
        <note>catalytic</note>
    </ligand>
</feature>
<feature type="binding site" evidence="1">
    <location>
        <position position="134"/>
    </location>
    <ligand>
        <name>Fe cation</name>
        <dbReference type="ChEBI" id="CHEBI:24875"/>
        <label>2</label>
        <note>catalytic</note>
    </ligand>
</feature>
<feature type="binding site" evidence="1">
    <location>
        <position position="137"/>
    </location>
    <ligand>
        <name>Fe cation</name>
        <dbReference type="ChEBI" id="CHEBI:24875"/>
        <label>1</label>
        <note>catalytic</note>
    </ligand>
</feature>
<feature type="binding site" evidence="1">
    <location>
        <position position="197"/>
    </location>
    <ligand>
        <name>Fe cation</name>
        <dbReference type="ChEBI" id="CHEBI:24875"/>
        <label>2</label>
        <note>catalytic</note>
    </ligand>
</feature>
<feature type="binding site" evidence="1">
    <location>
        <position position="231"/>
    </location>
    <ligand>
        <name>Fe cation</name>
        <dbReference type="ChEBI" id="CHEBI:24875"/>
        <label>1</label>
        <note>catalytic</note>
    </ligand>
</feature>
<feature type="binding site" evidence="1">
    <location>
        <position position="231"/>
    </location>
    <ligand>
        <name>Fe cation</name>
        <dbReference type="ChEBI" id="CHEBI:24875"/>
        <label>2</label>
        <note>catalytic</note>
    </ligand>
</feature>
<feature type="binding site" evidence="1">
    <location>
        <position position="234"/>
    </location>
    <ligand>
        <name>Fe cation</name>
        <dbReference type="ChEBI" id="CHEBI:24875"/>
        <label>2</label>
        <note>catalytic</note>
    </ligand>
</feature>
<protein>
    <recommendedName>
        <fullName evidence="6">Alkene monooxygenase system, oxygenase component subunit alpha</fullName>
        <ecNumber evidence="3 5">1.14.13.69</ecNumber>
    </recommendedName>
</protein>
<evidence type="ECO:0000250" key="1">
    <source>
        <dbReference type="UniProtKB" id="Q00456"/>
    </source>
</evidence>
<evidence type="ECO:0000269" key="2">
    <source>
    </source>
</evidence>
<evidence type="ECO:0000269" key="3">
    <source>
    </source>
</evidence>
<evidence type="ECO:0000269" key="4">
    <source>
    </source>
</evidence>
<evidence type="ECO:0000269" key="5">
    <source>
    </source>
</evidence>
<evidence type="ECO:0000303" key="6">
    <source>
    </source>
</evidence>
<evidence type="ECO:0000303" key="7">
    <source>
    </source>
</evidence>
<evidence type="ECO:0000305" key="8"/>
<evidence type="ECO:0000305" key="9">
    <source>
    </source>
</evidence>
<evidence type="ECO:0000305" key="10">
    <source>
    </source>
</evidence>
<evidence type="ECO:0000312" key="11">
    <source>
        <dbReference type="EMBL" id="ABS70068.1"/>
    </source>
</evidence>
<evidence type="ECO:0000312" key="12">
    <source>
        <dbReference type="EMBL" id="CAA07366.1"/>
    </source>
</evidence>
<evidence type="ECO:0000312" key="13">
    <source>
        <dbReference type="EMBL" id="CAA09911.1"/>
    </source>
</evidence>
<evidence type="ECO:0000312" key="14">
    <source>
        <dbReference type="Proteomes" id="UP000002417"/>
    </source>
</evidence>
<gene>
    <name evidence="7 12" type="primary">xamoA</name>
    <name evidence="6" type="synonym">aamA</name>
    <name evidence="11" type="ordered locus">Xaut_4857</name>
</gene>